<evidence type="ECO:0000255" key="1">
    <source>
        <dbReference type="HAMAP-Rule" id="MF_01217"/>
    </source>
</evidence>
<evidence type="ECO:0000255" key="2">
    <source>
        <dbReference type="PROSITE-ProRule" id="PRU00258"/>
    </source>
</evidence>
<name>ACP_THEVB</name>
<dbReference type="EMBL" id="BA000039">
    <property type="protein sequence ID" value="BAC09424.1"/>
    <property type="molecule type" value="Genomic_DNA"/>
</dbReference>
<dbReference type="RefSeq" id="NP_682662.1">
    <property type="nucleotide sequence ID" value="NC_004113.1"/>
</dbReference>
<dbReference type="RefSeq" id="WP_011057709.1">
    <property type="nucleotide sequence ID" value="NC_004113.1"/>
</dbReference>
<dbReference type="SMR" id="Q8DHS3"/>
<dbReference type="STRING" id="197221.gene:10748478"/>
<dbReference type="EnsemblBacteria" id="BAC09424">
    <property type="protein sequence ID" value="BAC09424"/>
    <property type="gene ID" value="BAC09424"/>
</dbReference>
<dbReference type="KEGG" id="tel:tsl1872"/>
<dbReference type="PATRIC" id="fig|197221.4.peg.1955"/>
<dbReference type="eggNOG" id="COG0236">
    <property type="taxonomic scope" value="Bacteria"/>
</dbReference>
<dbReference type="UniPathway" id="UPA00094"/>
<dbReference type="Proteomes" id="UP000000440">
    <property type="component" value="Chromosome"/>
</dbReference>
<dbReference type="GO" id="GO:0005829">
    <property type="term" value="C:cytosol"/>
    <property type="evidence" value="ECO:0007669"/>
    <property type="project" value="TreeGrafter"/>
</dbReference>
<dbReference type="GO" id="GO:0016020">
    <property type="term" value="C:membrane"/>
    <property type="evidence" value="ECO:0007669"/>
    <property type="project" value="GOC"/>
</dbReference>
<dbReference type="GO" id="GO:0000035">
    <property type="term" value="F:acyl binding"/>
    <property type="evidence" value="ECO:0007669"/>
    <property type="project" value="TreeGrafter"/>
</dbReference>
<dbReference type="GO" id="GO:0000036">
    <property type="term" value="F:acyl carrier activity"/>
    <property type="evidence" value="ECO:0007669"/>
    <property type="project" value="UniProtKB-UniRule"/>
</dbReference>
<dbReference type="GO" id="GO:0009245">
    <property type="term" value="P:lipid A biosynthetic process"/>
    <property type="evidence" value="ECO:0007669"/>
    <property type="project" value="TreeGrafter"/>
</dbReference>
<dbReference type="FunFam" id="1.10.1200.10:FF:000003">
    <property type="entry name" value="Acyl carrier protein"/>
    <property type="match status" value="1"/>
</dbReference>
<dbReference type="Gene3D" id="1.10.1200.10">
    <property type="entry name" value="ACP-like"/>
    <property type="match status" value="1"/>
</dbReference>
<dbReference type="HAMAP" id="MF_01217">
    <property type="entry name" value="Acyl_carrier"/>
    <property type="match status" value="1"/>
</dbReference>
<dbReference type="InterPro" id="IPR003231">
    <property type="entry name" value="ACP"/>
</dbReference>
<dbReference type="InterPro" id="IPR036736">
    <property type="entry name" value="ACP-like_sf"/>
</dbReference>
<dbReference type="InterPro" id="IPR009081">
    <property type="entry name" value="PP-bd_ACP"/>
</dbReference>
<dbReference type="InterPro" id="IPR006162">
    <property type="entry name" value="Ppantetheine_attach_site"/>
</dbReference>
<dbReference type="NCBIfam" id="TIGR00517">
    <property type="entry name" value="acyl_carrier"/>
    <property type="match status" value="1"/>
</dbReference>
<dbReference type="NCBIfam" id="NF002148">
    <property type="entry name" value="PRK00982.1-2"/>
    <property type="match status" value="1"/>
</dbReference>
<dbReference type="NCBIfam" id="NF002149">
    <property type="entry name" value="PRK00982.1-3"/>
    <property type="match status" value="1"/>
</dbReference>
<dbReference type="NCBIfam" id="NF002150">
    <property type="entry name" value="PRK00982.1-4"/>
    <property type="match status" value="1"/>
</dbReference>
<dbReference type="NCBIfam" id="NF002151">
    <property type="entry name" value="PRK00982.1-5"/>
    <property type="match status" value="1"/>
</dbReference>
<dbReference type="PANTHER" id="PTHR20863">
    <property type="entry name" value="ACYL CARRIER PROTEIN"/>
    <property type="match status" value="1"/>
</dbReference>
<dbReference type="PANTHER" id="PTHR20863:SF76">
    <property type="entry name" value="CARRIER DOMAIN-CONTAINING PROTEIN"/>
    <property type="match status" value="1"/>
</dbReference>
<dbReference type="Pfam" id="PF00550">
    <property type="entry name" value="PP-binding"/>
    <property type="match status" value="1"/>
</dbReference>
<dbReference type="SUPFAM" id="SSF47336">
    <property type="entry name" value="ACP-like"/>
    <property type="match status" value="1"/>
</dbReference>
<dbReference type="PROSITE" id="PS50075">
    <property type="entry name" value="CARRIER"/>
    <property type="match status" value="1"/>
</dbReference>
<dbReference type="PROSITE" id="PS00012">
    <property type="entry name" value="PHOSPHOPANTETHEINE"/>
    <property type="match status" value="1"/>
</dbReference>
<accession>Q8DHS3</accession>
<feature type="chain" id="PRO_0000180205" description="Acyl carrier protein">
    <location>
        <begin position="1"/>
        <end position="81"/>
    </location>
</feature>
<feature type="domain" description="Carrier" evidence="2">
    <location>
        <begin position="4"/>
        <end position="79"/>
    </location>
</feature>
<feature type="modified residue" description="O-(pantetheine 4'-phosphoryl)serine" evidence="2">
    <location>
        <position position="39"/>
    </location>
</feature>
<comment type="function">
    <text evidence="1">Carrier of the growing fatty acid chain in fatty acid biosynthesis.</text>
</comment>
<comment type="pathway">
    <text evidence="1">Lipid metabolism; fatty acid biosynthesis.</text>
</comment>
<comment type="subcellular location">
    <subcellularLocation>
        <location evidence="1">Cytoplasm</location>
    </subcellularLocation>
</comment>
<comment type="PTM">
    <text evidence="1">4'-phosphopantetheine is transferred from CoA to a specific serine of apo-ACP by AcpS. This modification is essential for activity because fatty acids are bound in thioester linkage to the sulfhydryl of the prosthetic group.</text>
</comment>
<comment type="similarity">
    <text evidence="1">Belongs to the acyl carrier protein (ACP) family.</text>
</comment>
<protein>
    <recommendedName>
        <fullName evidence="1">Acyl carrier protein</fullName>
        <shortName evidence="1">ACP</shortName>
    </recommendedName>
</protein>
<gene>
    <name evidence="1" type="primary">acpP</name>
    <name type="synonym">acp</name>
    <name type="ordered locus">tsl1872</name>
</gene>
<keyword id="KW-0963">Cytoplasm</keyword>
<keyword id="KW-0275">Fatty acid biosynthesis</keyword>
<keyword id="KW-0276">Fatty acid metabolism</keyword>
<keyword id="KW-0444">Lipid biosynthesis</keyword>
<keyword id="KW-0443">Lipid metabolism</keyword>
<keyword id="KW-0596">Phosphopantetheine</keyword>
<keyword id="KW-0597">Phosphoprotein</keyword>
<keyword id="KW-1185">Reference proteome</keyword>
<proteinExistence type="inferred from homology"/>
<reference key="1">
    <citation type="journal article" date="2002" name="DNA Res.">
        <title>Complete genome structure of the thermophilic cyanobacterium Thermosynechococcus elongatus BP-1.</title>
        <authorList>
            <person name="Nakamura Y."/>
            <person name="Kaneko T."/>
            <person name="Sato S."/>
            <person name="Ikeuchi M."/>
            <person name="Katoh H."/>
            <person name="Sasamoto S."/>
            <person name="Watanabe A."/>
            <person name="Iriguchi M."/>
            <person name="Kawashima K."/>
            <person name="Kimura T."/>
            <person name="Kishida Y."/>
            <person name="Kiyokawa C."/>
            <person name="Kohara M."/>
            <person name="Matsumoto M."/>
            <person name="Matsuno A."/>
            <person name="Nakazaki N."/>
            <person name="Shimpo S."/>
            <person name="Sugimoto M."/>
            <person name="Takeuchi C."/>
            <person name="Yamada M."/>
            <person name="Tabata S."/>
        </authorList>
    </citation>
    <scope>NUCLEOTIDE SEQUENCE [LARGE SCALE GENOMIC DNA]</scope>
    <source>
        <strain>NIES-2133 / IAM M-273 / BP-1</strain>
    </source>
</reference>
<sequence length="81" mass="8918">MNQSEILEKVKAIVADQLSVDPEKVVPEASFAEDLNADSLDSVELIMALEEEFGVEIPDEEAEKLKTVQDVLDFINNKVAA</sequence>
<organism>
    <name type="scientific">Thermosynechococcus vestitus (strain NIES-2133 / IAM M-273 / BP-1)</name>
    <dbReference type="NCBI Taxonomy" id="197221"/>
    <lineage>
        <taxon>Bacteria</taxon>
        <taxon>Bacillati</taxon>
        <taxon>Cyanobacteriota</taxon>
        <taxon>Cyanophyceae</taxon>
        <taxon>Acaryochloridales</taxon>
        <taxon>Thermosynechococcaceae</taxon>
        <taxon>Thermosynechococcus</taxon>
    </lineage>
</organism>